<accession>P62390</accession>
<accession>P01472</accession>
<protein>
    <recommendedName>
        <fullName>Cytotoxin 11</fullName>
    </recommendedName>
    <alternativeName>
        <fullName evidence="5">Toxin CM-13a</fullName>
    </alternativeName>
</protein>
<dbReference type="PIR" id="A01732">
    <property type="entry name" value="H3NJZE"/>
</dbReference>
<dbReference type="SMR" id="P62390"/>
<dbReference type="GO" id="GO:0005576">
    <property type="term" value="C:extracellular region"/>
    <property type="evidence" value="ECO:0007669"/>
    <property type="project" value="UniProtKB-SubCell"/>
</dbReference>
<dbReference type="GO" id="GO:0016020">
    <property type="term" value="C:membrane"/>
    <property type="evidence" value="ECO:0007669"/>
    <property type="project" value="UniProtKB-KW"/>
</dbReference>
<dbReference type="GO" id="GO:0044218">
    <property type="term" value="C:other organism cell membrane"/>
    <property type="evidence" value="ECO:0007669"/>
    <property type="project" value="UniProtKB-KW"/>
</dbReference>
<dbReference type="GO" id="GO:0090729">
    <property type="term" value="F:toxin activity"/>
    <property type="evidence" value="ECO:0007669"/>
    <property type="project" value="UniProtKB-KW"/>
</dbReference>
<dbReference type="CDD" id="cd00206">
    <property type="entry name" value="TFP_snake_toxin"/>
    <property type="match status" value="1"/>
</dbReference>
<dbReference type="FunFam" id="2.10.60.10:FF:000024">
    <property type="entry name" value="Cytotoxin 1"/>
    <property type="match status" value="1"/>
</dbReference>
<dbReference type="Gene3D" id="2.10.60.10">
    <property type="entry name" value="CD59"/>
    <property type="match status" value="1"/>
</dbReference>
<dbReference type="InterPro" id="IPR003572">
    <property type="entry name" value="Cytotoxin_Cobra"/>
</dbReference>
<dbReference type="InterPro" id="IPR003571">
    <property type="entry name" value="Snake_3FTx"/>
</dbReference>
<dbReference type="InterPro" id="IPR045860">
    <property type="entry name" value="Snake_toxin-like_sf"/>
</dbReference>
<dbReference type="InterPro" id="IPR018354">
    <property type="entry name" value="Snake_toxin_con_site"/>
</dbReference>
<dbReference type="InterPro" id="IPR054131">
    <property type="entry name" value="Toxin_cobra-type"/>
</dbReference>
<dbReference type="Pfam" id="PF21947">
    <property type="entry name" value="Toxin_cobra-type"/>
    <property type="match status" value="1"/>
</dbReference>
<dbReference type="PRINTS" id="PR00282">
    <property type="entry name" value="CYTOTOXIN"/>
</dbReference>
<dbReference type="SUPFAM" id="SSF57302">
    <property type="entry name" value="Snake toxin-like"/>
    <property type="match status" value="1"/>
</dbReference>
<dbReference type="PROSITE" id="PS00272">
    <property type="entry name" value="SNAKE_TOXIN"/>
    <property type="match status" value="1"/>
</dbReference>
<organism>
    <name type="scientific">Naja annulifera</name>
    <name type="common">Banded Egyptian cobra</name>
    <name type="synonym">Naja haje annulifera</name>
    <dbReference type="NCBI Taxonomy" id="96794"/>
    <lineage>
        <taxon>Eukaryota</taxon>
        <taxon>Metazoa</taxon>
        <taxon>Chordata</taxon>
        <taxon>Craniata</taxon>
        <taxon>Vertebrata</taxon>
        <taxon>Euteleostomi</taxon>
        <taxon>Lepidosauria</taxon>
        <taxon>Squamata</taxon>
        <taxon>Bifurcata</taxon>
        <taxon>Unidentata</taxon>
        <taxon>Episquamata</taxon>
        <taxon>Toxicofera</taxon>
        <taxon>Serpentes</taxon>
        <taxon>Colubroidea</taxon>
        <taxon>Elapidae</taxon>
        <taxon>Elapinae</taxon>
        <taxon>Naja</taxon>
    </lineage>
</organism>
<keyword id="KW-0903">Direct protein sequencing</keyword>
<keyword id="KW-1015">Disulfide bond</keyword>
<keyword id="KW-0472">Membrane</keyword>
<keyword id="KW-0964">Secreted</keyword>
<keyword id="KW-1052">Target cell membrane</keyword>
<keyword id="KW-1053">Target membrane</keyword>
<keyword id="KW-0800">Toxin</keyword>
<reference key="1">
    <citation type="journal article" date="1976" name="Eur. J. Biochem.">
        <title>Snake venom toxins. The amino-acid sequences of three toxins (CM-8, CM-11 and CM-13a) from Naja haje annulifera (Egyptian cobra) venom.</title>
        <authorList>
            <person name="Joubert F.J."/>
        </authorList>
    </citation>
    <scope>PROTEIN SEQUENCE</scope>
    <scope>TOXIC DOSE</scope>
    <scope>SUBCELLULAR LOCATION</scope>
    <source>
        <tissue>Venom</tissue>
    </source>
</reference>
<reference key="2">
    <citation type="journal article" date="1978" name="Eur. J. Biochem.">
        <title>Naja haje haje (Egyptian cobra) venom. Some properties and the complete primary structure of three toxins (CM-2, CM-11 and CM-12).</title>
        <authorList>
            <person name="Joubert F.J."/>
            <person name="Taljaard N."/>
        </authorList>
    </citation>
    <scope>SEQUENCE REVISION TO 53-62</scope>
    <source>
        <tissue>Venom</tissue>
    </source>
</reference>
<sequence>LKCHNTQLPFIYKTCPEGKNLCFKTTLKKLPLKIPIKRGCAATCPKSSALLKVVCCSTDKCN</sequence>
<evidence type="ECO:0000250" key="1">
    <source>
        <dbReference type="UniProtKB" id="P14541"/>
    </source>
</evidence>
<evidence type="ECO:0000250" key="2">
    <source>
        <dbReference type="UniProtKB" id="P60301"/>
    </source>
</evidence>
<evidence type="ECO:0000250" key="3">
    <source>
        <dbReference type="UniProtKB" id="P62375"/>
    </source>
</evidence>
<evidence type="ECO:0000269" key="4">
    <source>
    </source>
</evidence>
<evidence type="ECO:0000303" key="5">
    <source>
    </source>
</evidence>
<evidence type="ECO:0000305" key="6"/>
<name>3SOFB_NAJHA</name>
<proteinExistence type="evidence at protein level"/>
<feature type="chain" id="PRO_0000093495" description="Cytotoxin 11" evidence="4">
    <location>
        <begin position="1"/>
        <end position="62"/>
    </location>
</feature>
<feature type="disulfide bond" evidence="2">
    <location>
        <begin position="3"/>
        <end position="22"/>
    </location>
</feature>
<feature type="disulfide bond" evidence="2">
    <location>
        <begin position="15"/>
        <end position="40"/>
    </location>
</feature>
<feature type="disulfide bond" evidence="2">
    <location>
        <begin position="44"/>
        <end position="55"/>
    </location>
</feature>
<feature type="disulfide bond" evidence="2">
    <location>
        <begin position="56"/>
        <end position="61"/>
    </location>
</feature>
<comment type="function">
    <text evidence="1">Has low cytotoxic activity.</text>
</comment>
<comment type="subcellular location">
    <subcellularLocation>
        <location evidence="4">Secreted</location>
    </subcellularLocation>
    <subcellularLocation>
        <location evidence="3">Target cell membrane</location>
    </subcellularLocation>
</comment>
<comment type="tissue specificity">
    <text evidence="6">Expressed by the venom gland.</text>
</comment>
<comment type="toxic dose">
    <text evidence="4">LD(50) is 25.2 mg/kg by intravenous injection.</text>
</comment>
<comment type="miscellaneous">
    <text evidence="6">Is classified as a P-type cytotoxin, since a proline residue stands at position 31 (Pro-31 in standard classification).</text>
</comment>
<comment type="similarity">
    <text evidence="6">Belongs to the three-finger toxin family. Short-chain subfamily. Orphan group XV sub-subfamily.</text>
</comment>